<reference key="1">
    <citation type="journal article" date="2004" name="Science">
        <title>A predator unmasked: life cycle of Bdellovibrio bacteriovorus from a genomic perspective.</title>
        <authorList>
            <person name="Rendulic S."/>
            <person name="Jagtap P."/>
            <person name="Rosinus A."/>
            <person name="Eppinger M."/>
            <person name="Baar C."/>
            <person name="Lanz C."/>
            <person name="Keller H."/>
            <person name="Lambert C."/>
            <person name="Evans K.J."/>
            <person name="Goesmann A."/>
            <person name="Meyer F."/>
            <person name="Sockett R.E."/>
            <person name="Schuster S.C."/>
        </authorList>
    </citation>
    <scope>NUCLEOTIDE SEQUENCE [LARGE SCALE GENOMIC DNA]</scope>
    <source>
        <strain>ATCC 15356 / DSM 50701 / NCIMB 9529 / HD100</strain>
    </source>
</reference>
<keyword id="KW-0067">ATP-binding</keyword>
<keyword id="KW-0997">Cell inner membrane</keyword>
<keyword id="KW-1003">Cell membrane</keyword>
<keyword id="KW-0378">Hydrolase</keyword>
<keyword id="KW-0472">Membrane</keyword>
<keyword id="KW-0479">Metal-binding</keyword>
<keyword id="KW-0482">Metalloprotease</keyword>
<keyword id="KW-0547">Nucleotide-binding</keyword>
<keyword id="KW-0645">Protease</keyword>
<keyword id="KW-1185">Reference proteome</keyword>
<keyword id="KW-0812">Transmembrane</keyword>
<keyword id="KW-1133">Transmembrane helix</keyword>
<keyword id="KW-0862">Zinc</keyword>
<accession>Q6MJV1</accession>
<protein>
    <recommendedName>
        <fullName evidence="1">ATP-dependent zinc metalloprotease FtsH 2</fullName>
        <ecNumber evidence="1">3.4.24.-</ecNumber>
    </recommendedName>
</protein>
<gene>
    <name evidence="1" type="primary">ftsH2</name>
    <name type="ordered locus">Bd2667</name>
</gene>
<comment type="function">
    <text evidence="1">Acts as a processive, ATP-dependent zinc metallopeptidase for both cytoplasmic and membrane proteins. Plays a role in the quality control of integral membrane proteins.</text>
</comment>
<comment type="cofactor">
    <cofactor evidence="1">
        <name>Zn(2+)</name>
        <dbReference type="ChEBI" id="CHEBI:29105"/>
    </cofactor>
    <text evidence="1">Binds 1 zinc ion per subunit.</text>
</comment>
<comment type="subunit">
    <text evidence="1">Homohexamer.</text>
</comment>
<comment type="subcellular location">
    <subcellularLocation>
        <location evidence="1">Cell inner membrane</location>
        <topology evidence="1">Multi-pass membrane protein</topology>
        <orientation evidence="1">Cytoplasmic side</orientation>
    </subcellularLocation>
</comment>
<comment type="similarity">
    <text evidence="1">In the central section; belongs to the AAA ATPase family.</text>
</comment>
<comment type="similarity">
    <text evidence="1">In the C-terminal section; belongs to the peptidase M41 family.</text>
</comment>
<feature type="chain" id="PRO_0000400329" description="ATP-dependent zinc metalloprotease FtsH 2">
    <location>
        <begin position="1"/>
        <end position="615"/>
    </location>
</feature>
<feature type="topological domain" description="Cytoplasmic" evidence="1">
    <location>
        <begin position="1"/>
        <end position="7"/>
    </location>
</feature>
<feature type="transmembrane region" description="Helical" evidence="1">
    <location>
        <begin position="8"/>
        <end position="28"/>
    </location>
</feature>
<feature type="topological domain" description="Periplasmic" evidence="1">
    <location>
        <begin position="29"/>
        <end position="99"/>
    </location>
</feature>
<feature type="transmembrane region" description="Helical" evidence="1">
    <location>
        <begin position="100"/>
        <end position="120"/>
    </location>
</feature>
<feature type="topological domain" description="Cytoplasmic" evidence="1">
    <location>
        <begin position="121"/>
        <end position="615"/>
    </location>
</feature>
<feature type="active site" evidence="1">
    <location>
        <position position="419"/>
    </location>
</feature>
<feature type="binding site" evidence="1">
    <location>
        <begin position="195"/>
        <end position="202"/>
    </location>
    <ligand>
        <name>ATP</name>
        <dbReference type="ChEBI" id="CHEBI:30616"/>
    </ligand>
</feature>
<feature type="binding site" evidence="1">
    <location>
        <position position="418"/>
    </location>
    <ligand>
        <name>Zn(2+)</name>
        <dbReference type="ChEBI" id="CHEBI:29105"/>
        <note>catalytic</note>
    </ligand>
</feature>
<feature type="binding site" evidence="1">
    <location>
        <position position="422"/>
    </location>
    <ligand>
        <name>Zn(2+)</name>
        <dbReference type="ChEBI" id="CHEBI:29105"/>
        <note>catalytic</note>
    </ligand>
</feature>
<feature type="binding site" evidence="1">
    <location>
        <position position="495"/>
    </location>
    <ligand>
        <name>Zn(2+)</name>
        <dbReference type="ChEBI" id="CHEBI:29105"/>
        <note>catalytic</note>
    </ligand>
</feature>
<proteinExistence type="inferred from homology"/>
<organism>
    <name type="scientific">Bdellovibrio bacteriovorus (strain ATCC 15356 / DSM 50701 / NCIMB 9529 / HD100)</name>
    <dbReference type="NCBI Taxonomy" id="264462"/>
    <lineage>
        <taxon>Bacteria</taxon>
        <taxon>Pseudomonadati</taxon>
        <taxon>Bdellovibrionota</taxon>
        <taxon>Bdellovibrionia</taxon>
        <taxon>Bdellovibrionales</taxon>
        <taxon>Pseudobdellovibrionaceae</taxon>
        <taxon>Bdellovibrio</taxon>
    </lineage>
</organism>
<dbReference type="EC" id="3.4.24.-" evidence="1"/>
<dbReference type="EMBL" id="BX842653">
    <property type="protein sequence ID" value="CAE80458.1"/>
    <property type="molecule type" value="Genomic_DNA"/>
</dbReference>
<dbReference type="RefSeq" id="WP_011165061.1">
    <property type="nucleotide sequence ID" value="NC_005363.1"/>
</dbReference>
<dbReference type="SMR" id="Q6MJV1"/>
<dbReference type="STRING" id="264462.Bd2667"/>
<dbReference type="GeneID" id="93013557"/>
<dbReference type="KEGG" id="bba:Bd2667"/>
<dbReference type="eggNOG" id="COG0465">
    <property type="taxonomic scope" value="Bacteria"/>
</dbReference>
<dbReference type="HOGENOM" id="CLU_000688_16_2_7"/>
<dbReference type="Proteomes" id="UP000008080">
    <property type="component" value="Chromosome"/>
</dbReference>
<dbReference type="GO" id="GO:0005886">
    <property type="term" value="C:plasma membrane"/>
    <property type="evidence" value="ECO:0007669"/>
    <property type="project" value="UniProtKB-SubCell"/>
</dbReference>
<dbReference type="GO" id="GO:0005524">
    <property type="term" value="F:ATP binding"/>
    <property type="evidence" value="ECO:0007669"/>
    <property type="project" value="UniProtKB-UniRule"/>
</dbReference>
<dbReference type="GO" id="GO:0016887">
    <property type="term" value="F:ATP hydrolysis activity"/>
    <property type="evidence" value="ECO:0007669"/>
    <property type="project" value="UniProtKB-UniRule"/>
</dbReference>
<dbReference type="GO" id="GO:0004176">
    <property type="term" value="F:ATP-dependent peptidase activity"/>
    <property type="evidence" value="ECO:0007669"/>
    <property type="project" value="InterPro"/>
</dbReference>
<dbReference type="GO" id="GO:0004222">
    <property type="term" value="F:metalloendopeptidase activity"/>
    <property type="evidence" value="ECO:0007669"/>
    <property type="project" value="InterPro"/>
</dbReference>
<dbReference type="GO" id="GO:0008270">
    <property type="term" value="F:zinc ion binding"/>
    <property type="evidence" value="ECO:0007669"/>
    <property type="project" value="UniProtKB-UniRule"/>
</dbReference>
<dbReference type="GO" id="GO:0030163">
    <property type="term" value="P:protein catabolic process"/>
    <property type="evidence" value="ECO:0007669"/>
    <property type="project" value="UniProtKB-UniRule"/>
</dbReference>
<dbReference type="GO" id="GO:0006508">
    <property type="term" value="P:proteolysis"/>
    <property type="evidence" value="ECO:0007669"/>
    <property type="project" value="UniProtKB-KW"/>
</dbReference>
<dbReference type="CDD" id="cd19501">
    <property type="entry name" value="RecA-like_FtsH"/>
    <property type="match status" value="1"/>
</dbReference>
<dbReference type="FunFam" id="1.10.8.60:FF:000001">
    <property type="entry name" value="ATP-dependent zinc metalloprotease FtsH"/>
    <property type="match status" value="1"/>
</dbReference>
<dbReference type="FunFam" id="1.20.58.760:FF:000001">
    <property type="entry name" value="ATP-dependent zinc metalloprotease FtsH"/>
    <property type="match status" value="1"/>
</dbReference>
<dbReference type="FunFam" id="3.40.50.300:FF:000001">
    <property type="entry name" value="ATP-dependent zinc metalloprotease FtsH"/>
    <property type="match status" value="1"/>
</dbReference>
<dbReference type="Gene3D" id="1.10.8.60">
    <property type="match status" value="1"/>
</dbReference>
<dbReference type="Gene3D" id="3.30.720.210">
    <property type="match status" value="1"/>
</dbReference>
<dbReference type="Gene3D" id="3.40.50.300">
    <property type="entry name" value="P-loop containing nucleotide triphosphate hydrolases"/>
    <property type="match status" value="1"/>
</dbReference>
<dbReference type="Gene3D" id="1.20.58.760">
    <property type="entry name" value="Peptidase M41"/>
    <property type="match status" value="1"/>
</dbReference>
<dbReference type="HAMAP" id="MF_01458">
    <property type="entry name" value="FtsH"/>
    <property type="match status" value="1"/>
</dbReference>
<dbReference type="InterPro" id="IPR003593">
    <property type="entry name" value="AAA+_ATPase"/>
</dbReference>
<dbReference type="InterPro" id="IPR041569">
    <property type="entry name" value="AAA_lid_3"/>
</dbReference>
<dbReference type="InterPro" id="IPR050928">
    <property type="entry name" value="ATP-dep_Zn_Metalloprotease"/>
</dbReference>
<dbReference type="InterPro" id="IPR003959">
    <property type="entry name" value="ATPase_AAA_core"/>
</dbReference>
<dbReference type="InterPro" id="IPR003960">
    <property type="entry name" value="ATPase_AAA_CS"/>
</dbReference>
<dbReference type="InterPro" id="IPR005936">
    <property type="entry name" value="FtsH"/>
</dbReference>
<dbReference type="InterPro" id="IPR027417">
    <property type="entry name" value="P-loop_NTPase"/>
</dbReference>
<dbReference type="InterPro" id="IPR011546">
    <property type="entry name" value="Pept_M41_FtsH_extracell"/>
</dbReference>
<dbReference type="InterPro" id="IPR000642">
    <property type="entry name" value="Peptidase_M41"/>
</dbReference>
<dbReference type="InterPro" id="IPR037219">
    <property type="entry name" value="Peptidase_M41-like"/>
</dbReference>
<dbReference type="NCBIfam" id="TIGR01241">
    <property type="entry name" value="FtsH_fam"/>
    <property type="match status" value="1"/>
</dbReference>
<dbReference type="PANTHER" id="PTHR43655:SF2">
    <property type="entry name" value="AFG3 LIKE MATRIX AAA PEPTIDASE SUBUNIT 2, ISOFORM A"/>
    <property type="match status" value="1"/>
</dbReference>
<dbReference type="PANTHER" id="PTHR43655">
    <property type="entry name" value="ATP-DEPENDENT PROTEASE"/>
    <property type="match status" value="1"/>
</dbReference>
<dbReference type="Pfam" id="PF00004">
    <property type="entry name" value="AAA"/>
    <property type="match status" value="1"/>
</dbReference>
<dbReference type="Pfam" id="PF17862">
    <property type="entry name" value="AAA_lid_3"/>
    <property type="match status" value="1"/>
</dbReference>
<dbReference type="Pfam" id="PF06480">
    <property type="entry name" value="FtsH_ext"/>
    <property type="match status" value="1"/>
</dbReference>
<dbReference type="Pfam" id="PF01434">
    <property type="entry name" value="Peptidase_M41"/>
    <property type="match status" value="1"/>
</dbReference>
<dbReference type="SMART" id="SM00382">
    <property type="entry name" value="AAA"/>
    <property type="match status" value="1"/>
</dbReference>
<dbReference type="SUPFAM" id="SSF140990">
    <property type="entry name" value="FtsH protease domain-like"/>
    <property type="match status" value="1"/>
</dbReference>
<dbReference type="SUPFAM" id="SSF52540">
    <property type="entry name" value="P-loop containing nucleoside triphosphate hydrolases"/>
    <property type="match status" value="1"/>
</dbReference>
<dbReference type="PROSITE" id="PS00674">
    <property type="entry name" value="AAA"/>
    <property type="match status" value="1"/>
</dbReference>
<sequence>MNEPNRNFFWIFFLILGIFWLQSVWFGSRTVQQIPYSQYESLVKQGDVQNLIVTENHIRGEFKQPQNGFKSFVTNRVEPELAKELSGAGVTYRREIENTFFRDLLSWVVPALIFVAVFLYFSRKFAEKGGMSGLMSVGKSGARLYAETGVKVSFGDVAGVEEAKAELYEVVQFLKSPQEFGRLGARMPKGILLVGPPGTGKTLLAKAVAGEAQVPFYSITGSEFVEMFVGVGAARVRDLFEQARKNAPCIIFIDELDALGKVRGVAGSFGGHDEKEQTLNQLLAELDGFDSRSGVVILAATNRPEVLDPALLRAGRFDRQVLVDRPDRTGREQILRVHLKKIKADEALNVEHLAHLTSGFTGADIANLINEAAMVATRRKAETVNEKDFVAAIERIVAGLEKKSRLLNEKEKAIVAHHEMGHAIMACLFPGVDKVQKISIIPRGLGALGYTMQRPTEDRYLMTRPELLDKICVLLGGRVAEELIFGEVSTGASDDLVRVTNIAEALVTRYGMSEVLGNIVFEQPTGNFLEVPGAGYRSRTYSEKSATEIDQEIRQIVAACALRTRESLAANLSILKKGAAQLLEKETLSEPEIELLMRDLVVKNAAPQRERDLSV</sequence>
<name>FTSH2_BDEBA</name>
<evidence type="ECO:0000255" key="1">
    <source>
        <dbReference type="HAMAP-Rule" id="MF_01458"/>
    </source>
</evidence>